<feature type="signal peptide" evidence="1">
    <location>
        <begin position="1"/>
        <end position="18"/>
    </location>
</feature>
<feature type="chain" id="PRO_1000005695" description="Outer-membrane lipoprotein carrier protein">
    <location>
        <begin position="19"/>
        <end position="200"/>
    </location>
</feature>
<accession>Q5R0C0</accession>
<sequence length="200" mass="22847">MKAVVFAMVMAVSFNVFASGDESDKQALQSLLKQTQSLSAEFEQQVKDEQGEVLQTLSGTLKLKRPANLYWHTKEPDESVMVANGKKVWYYNPFVEQVTIYAQQDMVDDSPLLLVLNSNGNQWQNYNVSFRDNRYFVEHQTNGSKLELRFTDEKLTEITMVQAQGERTELMLNNVALNETISDEQFVFDVPADVDVDDQS</sequence>
<name>LOLA_IDILO</name>
<keyword id="KW-0143">Chaperone</keyword>
<keyword id="KW-0574">Periplasm</keyword>
<keyword id="KW-0653">Protein transport</keyword>
<keyword id="KW-1185">Reference proteome</keyword>
<keyword id="KW-0732">Signal</keyword>
<keyword id="KW-0813">Transport</keyword>
<organism>
    <name type="scientific">Idiomarina loihiensis (strain ATCC BAA-735 / DSM 15497 / L2-TR)</name>
    <dbReference type="NCBI Taxonomy" id="283942"/>
    <lineage>
        <taxon>Bacteria</taxon>
        <taxon>Pseudomonadati</taxon>
        <taxon>Pseudomonadota</taxon>
        <taxon>Gammaproteobacteria</taxon>
        <taxon>Alteromonadales</taxon>
        <taxon>Idiomarinaceae</taxon>
        <taxon>Idiomarina</taxon>
    </lineage>
</organism>
<dbReference type="EMBL" id="AE017340">
    <property type="protein sequence ID" value="AAV81507.1"/>
    <property type="molecule type" value="Genomic_DNA"/>
</dbReference>
<dbReference type="RefSeq" id="WP_011233919.1">
    <property type="nucleotide sequence ID" value="NC_006512.1"/>
</dbReference>
<dbReference type="SMR" id="Q5R0C0"/>
<dbReference type="STRING" id="283942.IL0666"/>
<dbReference type="GeneID" id="41335821"/>
<dbReference type="KEGG" id="ilo:IL0666"/>
<dbReference type="eggNOG" id="COG2834">
    <property type="taxonomic scope" value="Bacteria"/>
</dbReference>
<dbReference type="HOGENOM" id="CLU_087560_0_0_6"/>
<dbReference type="OrthoDB" id="9787361at2"/>
<dbReference type="Proteomes" id="UP000001171">
    <property type="component" value="Chromosome"/>
</dbReference>
<dbReference type="GO" id="GO:0030288">
    <property type="term" value="C:outer membrane-bounded periplasmic space"/>
    <property type="evidence" value="ECO:0007669"/>
    <property type="project" value="TreeGrafter"/>
</dbReference>
<dbReference type="GO" id="GO:0044874">
    <property type="term" value="P:lipoprotein localization to outer membrane"/>
    <property type="evidence" value="ECO:0007669"/>
    <property type="project" value="UniProtKB-UniRule"/>
</dbReference>
<dbReference type="GO" id="GO:0042953">
    <property type="term" value="P:lipoprotein transport"/>
    <property type="evidence" value="ECO:0007669"/>
    <property type="project" value="InterPro"/>
</dbReference>
<dbReference type="CDD" id="cd16325">
    <property type="entry name" value="LolA"/>
    <property type="match status" value="1"/>
</dbReference>
<dbReference type="Gene3D" id="2.50.20.10">
    <property type="entry name" value="Lipoprotein localisation LolA/LolB/LppX"/>
    <property type="match status" value="1"/>
</dbReference>
<dbReference type="HAMAP" id="MF_00240">
    <property type="entry name" value="LolA"/>
    <property type="match status" value="1"/>
</dbReference>
<dbReference type="InterPro" id="IPR029046">
    <property type="entry name" value="LolA/LolB/LppX"/>
</dbReference>
<dbReference type="InterPro" id="IPR004564">
    <property type="entry name" value="OM_lipoprot_carrier_LolA-like"/>
</dbReference>
<dbReference type="InterPro" id="IPR018323">
    <property type="entry name" value="OM_lipoprot_carrier_LolA_Pbac"/>
</dbReference>
<dbReference type="NCBIfam" id="TIGR00547">
    <property type="entry name" value="lolA"/>
    <property type="match status" value="1"/>
</dbReference>
<dbReference type="PANTHER" id="PTHR35869">
    <property type="entry name" value="OUTER-MEMBRANE LIPOPROTEIN CARRIER PROTEIN"/>
    <property type="match status" value="1"/>
</dbReference>
<dbReference type="PANTHER" id="PTHR35869:SF1">
    <property type="entry name" value="OUTER-MEMBRANE LIPOPROTEIN CARRIER PROTEIN"/>
    <property type="match status" value="1"/>
</dbReference>
<dbReference type="Pfam" id="PF03548">
    <property type="entry name" value="LolA"/>
    <property type="match status" value="1"/>
</dbReference>
<dbReference type="SUPFAM" id="SSF89392">
    <property type="entry name" value="Prokaryotic lipoproteins and lipoprotein localization factors"/>
    <property type="match status" value="1"/>
</dbReference>
<protein>
    <recommendedName>
        <fullName evidence="1">Outer-membrane lipoprotein carrier protein</fullName>
    </recommendedName>
</protein>
<evidence type="ECO:0000255" key="1">
    <source>
        <dbReference type="HAMAP-Rule" id="MF_00240"/>
    </source>
</evidence>
<proteinExistence type="inferred from homology"/>
<comment type="function">
    <text evidence="1">Participates in the translocation of lipoproteins from the inner membrane to the outer membrane. Only forms a complex with a lipoprotein if the residue after the N-terminal Cys is not an aspartate (The Asp acts as a targeting signal to indicate that the lipoprotein should stay in the inner membrane).</text>
</comment>
<comment type="subunit">
    <text evidence="1">Monomer.</text>
</comment>
<comment type="subcellular location">
    <subcellularLocation>
        <location evidence="1">Periplasm</location>
    </subcellularLocation>
</comment>
<comment type="similarity">
    <text evidence="1">Belongs to the LolA family.</text>
</comment>
<reference key="1">
    <citation type="journal article" date="2004" name="Proc. Natl. Acad. Sci. U.S.A.">
        <title>Genome sequence of the deep-sea gamma-proteobacterium Idiomarina loihiensis reveals amino acid fermentation as a source of carbon and energy.</title>
        <authorList>
            <person name="Hou S."/>
            <person name="Saw J.H."/>
            <person name="Lee K.S."/>
            <person name="Freitas T.A."/>
            <person name="Belisle C."/>
            <person name="Kawarabayasi Y."/>
            <person name="Donachie S.P."/>
            <person name="Pikina A."/>
            <person name="Galperin M.Y."/>
            <person name="Koonin E.V."/>
            <person name="Makarova K.S."/>
            <person name="Omelchenko M.V."/>
            <person name="Sorokin A."/>
            <person name="Wolf Y.I."/>
            <person name="Li Q.X."/>
            <person name="Keum Y.S."/>
            <person name="Campbell S."/>
            <person name="Denery J."/>
            <person name="Aizawa S."/>
            <person name="Shibata S."/>
            <person name="Malahoff A."/>
            <person name="Alam M."/>
        </authorList>
    </citation>
    <scope>NUCLEOTIDE SEQUENCE [LARGE SCALE GENOMIC DNA]</scope>
    <source>
        <strain>ATCC BAA-735 / DSM 15497 / L2-TR</strain>
    </source>
</reference>
<gene>
    <name evidence="1" type="primary">lolA</name>
    <name type="ordered locus">IL0666</name>
</gene>